<comment type="function">
    <text evidence="1 2 3">Photoreceptor required for image-forming vision at low light intensity. While most salt water fish species use retinal as chromophore, most freshwater fish use 3-dehydroretinal, or a mixture of retinal and 3-dehydroretinal (By similarity). Light-induced isomerization of 11-cis to all-trans retinal triggers a conformational change that activates signaling via G-proteins. Subsequent receptor phosphorylation mediates displacement of the bound G-protein alpha subunit by arrestin and terminates signaling (By similarity).</text>
</comment>
<comment type="subcellular location">
    <subcellularLocation>
        <location evidence="2">Membrane</location>
        <topology evidence="2">Multi-pass membrane protein</topology>
    </subcellularLocation>
    <subcellularLocation>
        <location evidence="4">Cell projection</location>
        <location evidence="4">Cilium</location>
        <location evidence="4">Photoreceptor outer segment</location>
    </subcellularLocation>
    <text evidence="2">Synthesized in the inner segment (IS) of rod photoreceptor cells before vectorial transport to disk membranes in the rod outer segment (OS) photosensory cilia.</text>
</comment>
<comment type="PTM">
    <text evidence="1">Phosphorylated on some or all of the serine and threonine residues present in the C-terminal region.</text>
</comment>
<comment type="PTM">
    <text evidence="1">Contains one covalently linked retinal chromophore.</text>
</comment>
<comment type="similarity">
    <text evidence="6">Belongs to the G-protein coupled receptor 1 family. Opsin subfamily.</text>
</comment>
<proteinExistence type="inferred from homology"/>
<accession>O42427</accession>
<feature type="chain" id="PRO_0000197679" description="Rhodopsin">
    <location>
        <begin position="1" status="less than"/>
        <end position="289" status="greater than"/>
    </location>
</feature>
<feature type="topological domain" description="Extracellular" evidence="7">
    <location>
        <begin position="1" status="less than"/>
        <end position="7"/>
    </location>
</feature>
<feature type="transmembrane region" description="Helical; Name=1" evidence="1">
    <location>
        <begin position="8"/>
        <end position="32"/>
    </location>
</feature>
<feature type="topological domain" description="Cytoplasmic" evidence="7">
    <location>
        <begin position="33"/>
        <end position="44"/>
    </location>
</feature>
<feature type="transmembrane region" description="Helical; Name=2" evidence="1">
    <location>
        <begin position="45"/>
        <end position="67"/>
    </location>
</feature>
<feature type="topological domain" description="Extracellular" evidence="7">
    <location>
        <begin position="68"/>
        <end position="81"/>
    </location>
</feature>
<feature type="transmembrane region" description="Helical; Name=3" evidence="1">
    <location>
        <begin position="82"/>
        <end position="104"/>
    </location>
</feature>
<feature type="topological domain" description="Cytoplasmic" evidence="7">
    <location>
        <begin position="105"/>
        <end position="123"/>
    </location>
</feature>
<feature type="transmembrane region" description="Helical; Name=4" evidence="1">
    <location>
        <begin position="124"/>
        <end position="144"/>
    </location>
</feature>
<feature type="topological domain" description="Extracellular" evidence="7">
    <location>
        <begin position="145"/>
        <end position="173"/>
    </location>
</feature>
<feature type="transmembrane region" description="Helical; Name=5" evidence="1">
    <location>
        <begin position="174"/>
        <end position="195"/>
    </location>
</feature>
<feature type="topological domain" description="Cytoplasmic" evidence="7">
    <location>
        <begin position="196"/>
        <end position="223"/>
    </location>
</feature>
<feature type="transmembrane region" description="Helical; Name=6" evidence="1">
    <location>
        <begin position="224"/>
        <end position="245"/>
    </location>
</feature>
<feature type="topological domain" description="Extracellular" evidence="7">
    <location>
        <begin position="246"/>
        <end position="257"/>
    </location>
</feature>
<feature type="transmembrane region" description="Helical; Name=7" evidence="1">
    <location>
        <begin position="258"/>
        <end position="279"/>
    </location>
</feature>
<feature type="topological domain" description="Cytoplasmic" evidence="7">
    <location>
        <begin position="280"/>
        <end position="289" status="greater than"/>
    </location>
</feature>
<feature type="short sequence motif" description="'Ionic lock' involved in activated form stabilization" evidence="1">
    <location>
        <begin position="105"/>
        <end position="107"/>
    </location>
</feature>
<feature type="site" description="Plays an important role in the conformation switch to the active conformation" evidence="1">
    <location>
        <position position="84"/>
    </location>
</feature>
<feature type="modified residue" description="N6-(retinylidene)lysine" evidence="1">
    <location>
        <position position="267"/>
    </location>
</feature>
<feature type="glycosylation site" description="N-linked (GlcNAc...) asparagine" evidence="5">
    <location>
        <position position="171"/>
    </location>
</feature>
<feature type="disulfide bond" evidence="6">
    <location>
        <begin position="81"/>
        <end position="158"/>
    </location>
</feature>
<feature type="non-terminal residue">
    <location>
        <position position="1"/>
    </location>
</feature>
<feature type="non-terminal residue">
    <location>
        <position position="289"/>
    </location>
</feature>
<dbReference type="EMBL" id="U97270">
    <property type="protein sequence ID" value="AAB61724.1"/>
    <property type="molecule type" value="Genomic_DNA"/>
</dbReference>
<dbReference type="SMR" id="O42427"/>
<dbReference type="GlyCosmos" id="O42427">
    <property type="glycosylation" value="1 site, No reported glycans"/>
</dbReference>
<dbReference type="GO" id="GO:0016020">
    <property type="term" value="C:membrane"/>
    <property type="evidence" value="ECO:0000250"/>
    <property type="project" value="UniProtKB"/>
</dbReference>
<dbReference type="GO" id="GO:0097381">
    <property type="term" value="C:photoreceptor disc membrane"/>
    <property type="evidence" value="ECO:0000250"/>
    <property type="project" value="UniProtKB"/>
</dbReference>
<dbReference type="GO" id="GO:0005886">
    <property type="term" value="C:plasma membrane"/>
    <property type="evidence" value="ECO:0000250"/>
    <property type="project" value="UniProtKB"/>
</dbReference>
<dbReference type="GO" id="GO:0005502">
    <property type="term" value="F:11-cis retinal binding"/>
    <property type="evidence" value="ECO:0000250"/>
    <property type="project" value="UniProtKB"/>
</dbReference>
<dbReference type="GO" id="GO:0008020">
    <property type="term" value="F:G protein-coupled photoreceptor activity"/>
    <property type="evidence" value="ECO:0000250"/>
    <property type="project" value="UniProtKB"/>
</dbReference>
<dbReference type="GO" id="GO:0016038">
    <property type="term" value="P:absorption of visible light"/>
    <property type="evidence" value="ECO:0000250"/>
    <property type="project" value="UniProtKB"/>
</dbReference>
<dbReference type="GO" id="GO:0016056">
    <property type="term" value="P:G protein-coupled opsin signaling pathway"/>
    <property type="evidence" value="ECO:0000250"/>
    <property type="project" value="UniProtKB"/>
</dbReference>
<dbReference type="GO" id="GO:0007601">
    <property type="term" value="P:visual perception"/>
    <property type="evidence" value="ECO:0007669"/>
    <property type="project" value="UniProtKB-KW"/>
</dbReference>
<dbReference type="FunFam" id="1.20.1070.10:FF:000357">
    <property type="entry name" value="Rhodopsin"/>
    <property type="match status" value="1"/>
</dbReference>
<dbReference type="Gene3D" id="1.20.1070.10">
    <property type="entry name" value="Rhodopsin 7-helix transmembrane proteins"/>
    <property type="match status" value="1"/>
</dbReference>
<dbReference type="InterPro" id="IPR050125">
    <property type="entry name" value="GPCR_opsins"/>
</dbReference>
<dbReference type="InterPro" id="IPR000276">
    <property type="entry name" value="GPCR_Rhodpsn"/>
</dbReference>
<dbReference type="InterPro" id="IPR017452">
    <property type="entry name" value="GPCR_Rhodpsn_7TM"/>
</dbReference>
<dbReference type="InterPro" id="IPR001760">
    <property type="entry name" value="Opsin"/>
</dbReference>
<dbReference type="InterPro" id="IPR027430">
    <property type="entry name" value="Retinal_BS"/>
</dbReference>
<dbReference type="InterPro" id="IPR000732">
    <property type="entry name" value="Rhodopsin"/>
</dbReference>
<dbReference type="PANTHER" id="PTHR24240">
    <property type="entry name" value="OPSIN"/>
    <property type="match status" value="1"/>
</dbReference>
<dbReference type="Pfam" id="PF00001">
    <property type="entry name" value="7tm_1"/>
    <property type="match status" value="1"/>
</dbReference>
<dbReference type="PRINTS" id="PR00237">
    <property type="entry name" value="GPCRRHODOPSN"/>
</dbReference>
<dbReference type="PRINTS" id="PR00238">
    <property type="entry name" value="OPSIN"/>
</dbReference>
<dbReference type="PRINTS" id="PR00579">
    <property type="entry name" value="RHODOPSIN"/>
</dbReference>
<dbReference type="SUPFAM" id="SSF81321">
    <property type="entry name" value="Family A G protein-coupled receptor-like"/>
    <property type="match status" value="1"/>
</dbReference>
<dbReference type="PROSITE" id="PS00237">
    <property type="entry name" value="G_PROTEIN_RECEP_F1_1"/>
    <property type="match status" value="1"/>
</dbReference>
<dbReference type="PROSITE" id="PS50262">
    <property type="entry name" value="G_PROTEIN_RECEP_F1_2"/>
    <property type="match status" value="1"/>
</dbReference>
<dbReference type="PROSITE" id="PS00238">
    <property type="entry name" value="OPSIN"/>
    <property type="match status" value="1"/>
</dbReference>
<organism>
    <name type="scientific">Limnocottus bergianus</name>
    <dbReference type="NCBI Taxonomy" id="61633"/>
    <lineage>
        <taxon>Eukaryota</taxon>
        <taxon>Metazoa</taxon>
        <taxon>Chordata</taxon>
        <taxon>Craniata</taxon>
        <taxon>Vertebrata</taxon>
        <taxon>Euteleostomi</taxon>
        <taxon>Actinopterygii</taxon>
        <taxon>Neopterygii</taxon>
        <taxon>Teleostei</taxon>
        <taxon>Neoteleostei</taxon>
        <taxon>Acanthomorphata</taxon>
        <taxon>Eupercaria</taxon>
        <taxon>Perciformes</taxon>
        <taxon>Cottioidei</taxon>
        <taxon>Cottales</taxon>
        <taxon>Cottidae</taxon>
        <taxon>Limnocottus</taxon>
    </lineage>
</organism>
<gene>
    <name type="primary">rho</name>
</gene>
<sequence length="289" mass="32446">YLVNPAGYAALGAYMFLLILIGSPVNFLTLYVTLEHKKLRTPLNYILLNLAVADLFMVLGGFTTTMYTSMHGYSVLGRLGCILEGFFATLGGEIALWSLVVLAIERWIVVCKPISNFRFTEDHAIMGLAFSWVMALACAVPPLVGWSRYIPEGMQCSCGVDYYTRAEGFNNESFVIYMFIVHFLIPLSVIFFCYGRLLCAVKEAAAAQQESETTQRPEKEVTRMVVIMVIAFLVCCLPNASVAWWIFCNQGSDFGPIFMTLPSFFAKSAAIYNPMIYICMNKQFRHCMI</sequence>
<evidence type="ECO:0000250" key="1">
    <source>
        <dbReference type="UniProtKB" id="P02699"/>
    </source>
</evidence>
<evidence type="ECO:0000250" key="2">
    <source>
        <dbReference type="UniProtKB" id="P08100"/>
    </source>
</evidence>
<evidence type="ECO:0000250" key="3">
    <source>
        <dbReference type="UniProtKB" id="P32309"/>
    </source>
</evidence>
<evidence type="ECO:0000250" key="4">
    <source>
        <dbReference type="UniProtKB" id="P35359"/>
    </source>
</evidence>
<evidence type="ECO:0000255" key="5"/>
<evidence type="ECO:0000255" key="6">
    <source>
        <dbReference type="PROSITE-ProRule" id="PRU00521"/>
    </source>
</evidence>
<evidence type="ECO:0000305" key="7"/>
<keyword id="KW-0966">Cell projection</keyword>
<keyword id="KW-0157">Chromophore</keyword>
<keyword id="KW-1015">Disulfide bond</keyword>
<keyword id="KW-0297">G-protein coupled receptor</keyword>
<keyword id="KW-0325">Glycoprotein</keyword>
<keyword id="KW-0449">Lipoprotein</keyword>
<keyword id="KW-0472">Membrane</keyword>
<keyword id="KW-0564">Palmitate</keyword>
<keyword id="KW-0597">Phosphoprotein</keyword>
<keyword id="KW-0600">Photoreceptor protein</keyword>
<keyword id="KW-0675">Receptor</keyword>
<keyword id="KW-0681">Retinal protein</keyword>
<keyword id="KW-0716">Sensory transduction</keyword>
<keyword id="KW-0807">Transducer</keyword>
<keyword id="KW-0812">Transmembrane</keyword>
<keyword id="KW-1133">Transmembrane helix</keyword>
<keyword id="KW-0844">Vision</keyword>
<reference key="1">
    <citation type="journal article" date="1997" name="Mol. Phylogenet. Evol.">
        <title>Molecular evolution of the cottoid fish endemic to Lake Baikal deduced from nuclear DNA evidence.</title>
        <authorList>
            <person name="Hunt D.M."/>
            <person name="Fitzgibbon J."/>
            <person name="Slobodyanyuk S.J."/>
            <person name="Bowmaker J.K."/>
            <person name="Dulai K.S."/>
        </authorList>
    </citation>
    <scope>NUCLEOTIDE SEQUENCE [GENOMIC DNA]</scope>
</reference>
<protein>
    <recommendedName>
        <fullName>Rhodopsin</fullName>
    </recommendedName>
</protein>
<name>OPSD_LIMBE</name>